<gene>
    <name evidence="1" type="primary">rplU</name>
    <name type="ordered locus">Sde_1008</name>
</gene>
<keyword id="KW-1185">Reference proteome</keyword>
<keyword id="KW-0687">Ribonucleoprotein</keyword>
<keyword id="KW-0689">Ribosomal protein</keyword>
<keyword id="KW-0694">RNA-binding</keyword>
<keyword id="KW-0699">rRNA-binding</keyword>
<reference key="1">
    <citation type="journal article" date="2008" name="PLoS Genet.">
        <title>Complete genome sequence of the complex carbohydrate-degrading marine bacterium, Saccharophagus degradans strain 2-40 T.</title>
        <authorList>
            <person name="Weiner R.M."/>
            <person name="Taylor L.E. II"/>
            <person name="Henrissat B."/>
            <person name="Hauser L."/>
            <person name="Land M."/>
            <person name="Coutinho P.M."/>
            <person name="Rancurel C."/>
            <person name="Saunders E.H."/>
            <person name="Longmire A.G."/>
            <person name="Zhang H."/>
            <person name="Bayer E.A."/>
            <person name="Gilbert H.J."/>
            <person name="Larimer F."/>
            <person name="Zhulin I.B."/>
            <person name="Ekborg N.A."/>
            <person name="Lamed R."/>
            <person name="Richardson P.M."/>
            <person name="Borovok I."/>
            <person name="Hutcheson S."/>
        </authorList>
    </citation>
    <scope>NUCLEOTIDE SEQUENCE [LARGE SCALE GENOMIC DNA]</scope>
    <source>
        <strain>2-40 / ATCC 43961 / DSM 17024</strain>
    </source>
</reference>
<name>RL21_SACD2</name>
<feature type="chain" id="PRO_0000270733" description="Large ribosomal subunit protein bL21">
    <location>
        <begin position="1"/>
        <end position="103"/>
    </location>
</feature>
<proteinExistence type="inferred from homology"/>
<evidence type="ECO:0000255" key="1">
    <source>
        <dbReference type="HAMAP-Rule" id="MF_01363"/>
    </source>
</evidence>
<evidence type="ECO:0000305" key="2"/>
<accession>Q21M09</accession>
<comment type="function">
    <text evidence="1">This protein binds to 23S rRNA in the presence of protein L20.</text>
</comment>
<comment type="subunit">
    <text evidence="1">Part of the 50S ribosomal subunit. Contacts protein L20.</text>
</comment>
<comment type="similarity">
    <text evidence="1">Belongs to the bacterial ribosomal protein bL21 family.</text>
</comment>
<sequence>MYAVFIAGGKQHRVEEGEVLRLEKIEVATGESVDFDQVLLVTKGDDVKIGAPYVEGAKVTAEVVSHGRADKVRIIKFRRRKHSMTRQGHRQWYTEVKITGIAG</sequence>
<protein>
    <recommendedName>
        <fullName evidence="1">Large ribosomal subunit protein bL21</fullName>
    </recommendedName>
    <alternativeName>
        <fullName evidence="2">50S ribosomal protein L21</fullName>
    </alternativeName>
</protein>
<dbReference type="EMBL" id="CP000282">
    <property type="protein sequence ID" value="ABD80270.1"/>
    <property type="molecule type" value="Genomic_DNA"/>
</dbReference>
<dbReference type="RefSeq" id="WP_011467490.1">
    <property type="nucleotide sequence ID" value="NC_007912.1"/>
</dbReference>
<dbReference type="SMR" id="Q21M09"/>
<dbReference type="STRING" id="203122.Sde_1008"/>
<dbReference type="GeneID" id="98612692"/>
<dbReference type="KEGG" id="sde:Sde_1008"/>
<dbReference type="eggNOG" id="COG0261">
    <property type="taxonomic scope" value="Bacteria"/>
</dbReference>
<dbReference type="HOGENOM" id="CLU_061463_3_2_6"/>
<dbReference type="OrthoDB" id="9813334at2"/>
<dbReference type="Proteomes" id="UP000001947">
    <property type="component" value="Chromosome"/>
</dbReference>
<dbReference type="GO" id="GO:0005737">
    <property type="term" value="C:cytoplasm"/>
    <property type="evidence" value="ECO:0007669"/>
    <property type="project" value="UniProtKB-ARBA"/>
</dbReference>
<dbReference type="GO" id="GO:1990904">
    <property type="term" value="C:ribonucleoprotein complex"/>
    <property type="evidence" value="ECO:0007669"/>
    <property type="project" value="UniProtKB-KW"/>
</dbReference>
<dbReference type="GO" id="GO:0005840">
    <property type="term" value="C:ribosome"/>
    <property type="evidence" value="ECO:0007669"/>
    <property type="project" value="UniProtKB-KW"/>
</dbReference>
<dbReference type="GO" id="GO:0019843">
    <property type="term" value="F:rRNA binding"/>
    <property type="evidence" value="ECO:0007669"/>
    <property type="project" value="UniProtKB-UniRule"/>
</dbReference>
<dbReference type="GO" id="GO:0003735">
    <property type="term" value="F:structural constituent of ribosome"/>
    <property type="evidence" value="ECO:0007669"/>
    <property type="project" value="InterPro"/>
</dbReference>
<dbReference type="GO" id="GO:0006412">
    <property type="term" value="P:translation"/>
    <property type="evidence" value="ECO:0007669"/>
    <property type="project" value="UniProtKB-UniRule"/>
</dbReference>
<dbReference type="HAMAP" id="MF_01363">
    <property type="entry name" value="Ribosomal_bL21"/>
    <property type="match status" value="1"/>
</dbReference>
<dbReference type="InterPro" id="IPR028909">
    <property type="entry name" value="bL21-like"/>
</dbReference>
<dbReference type="InterPro" id="IPR036164">
    <property type="entry name" value="bL21-like_sf"/>
</dbReference>
<dbReference type="InterPro" id="IPR001787">
    <property type="entry name" value="Ribosomal_bL21"/>
</dbReference>
<dbReference type="InterPro" id="IPR018258">
    <property type="entry name" value="Ribosomal_bL21_CS"/>
</dbReference>
<dbReference type="NCBIfam" id="TIGR00061">
    <property type="entry name" value="L21"/>
    <property type="match status" value="1"/>
</dbReference>
<dbReference type="PANTHER" id="PTHR21349">
    <property type="entry name" value="50S RIBOSOMAL PROTEIN L21"/>
    <property type="match status" value="1"/>
</dbReference>
<dbReference type="PANTHER" id="PTHR21349:SF0">
    <property type="entry name" value="LARGE RIBOSOMAL SUBUNIT PROTEIN BL21M"/>
    <property type="match status" value="1"/>
</dbReference>
<dbReference type="Pfam" id="PF00829">
    <property type="entry name" value="Ribosomal_L21p"/>
    <property type="match status" value="1"/>
</dbReference>
<dbReference type="SUPFAM" id="SSF141091">
    <property type="entry name" value="L21p-like"/>
    <property type="match status" value="1"/>
</dbReference>
<dbReference type="PROSITE" id="PS01169">
    <property type="entry name" value="RIBOSOMAL_L21"/>
    <property type="match status" value="1"/>
</dbReference>
<organism>
    <name type="scientific">Saccharophagus degradans (strain 2-40 / ATCC 43961 / DSM 17024)</name>
    <dbReference type="NCBI Taxonomy" id="203122"/>
    <lineage>
        <taxon>Bacteria</taxon>
        <taxon>Pseudomonadati</taxon>
        <taxon>Pseudomonadota</taxon>
        <taxon>Gammaproteobacteria</taxon>
        <taxon>Cellvibrionales</taxon>
        <taxon>Cellvibrionaceae</taxon>
        <taxon>Saccharophagus</taxon>
    </lineage>
</organism>